<organism>
    <name type="scientific">Schizosaccharomyces pombe (strain 972 / ATCC 24843)</name>
    <name type="common">Fission yeast</name>
    <dbReference type="NCBI Taxonomy" id="284812"/>
    <lineage>
        <taxon>Eukaryota</taxon>
        <taxon>Fungi</taxon>
        <taxon>Dikarya</taxon>
        <taxon>Ascomycota</taxon>
        <taxon>Taphrinomycotina</taxon>
        <taxon>Schizosaccharomycetes</taxon>
        <taxon>Schizosaccharomycetales</taxon>
        <taxon>Schizosaccharomycetaceae</taxon>
        <taxon>Schizosaccharomyces</taxon>
    </lineage>
</organism>
<keyword id="KW-0175">Coiled coil</keyword>
<keyword id="KW-0597">Phosphoprotein</keyword>
<keyword id="KW-1185">Reference proteome</keyword>
<keyword id="KW-0728">SH3 domain</keyword>
<name>HOB1_SCHPO</name>
<dbReference type="EMBL" id="AF275637">
    <property type="protein sequence ID" value="AAF86458.1"/>
    <property type="molecule type" value="mRNA"/>
</dbReference>
<dbReference type="EMBL" id="CU329671">
    <property type="protein sequence ID" value="CAA20768.1"/>
    <property type="molecule type" value="Genomic_DNA"/>
</dbReference>
<dbReference type="PIR" id="T11684">
    <property type="entry name" value="T11684"/>
</dbReference>
<dbReference type="RefSeq" id="NP_596001.1">
    <property type="nucleotide sequence ID" value="NM_001021909.2"/>
</dbReference>
<dbReference type="SMR" id="O74352"/>
<dbReference type="BioGRID" id="277159">
    <property type="interactions" value="13"/>
</dbReference>
<dbReference type="FunCoup" id="O74352">
    <property type="interactions" value="113"/>
</dbReference>
<dbReference type="STRING" id="284812.O74352"/>
<dbReference type="iPTMnet" id="O74352"/>
<dbReference type="PaxDb" id="4896-SPBC21D10.12.1"/>
<dbReference type="EnsemblFungi" id="SPBC21D10.12.1">
    <property type="protein sequence ID" value="SPBC21D10.12.1:pep"/>
    <property type="gene ID" value="SPBC21D10.12"/>
</dbReference>
<dbReference type="GeneID" id="2540633"/>
<dbReference type="KEGG" id="spo:2540633"/>
<dbReference type="PomBase" id="SPBC21D10.12">
    <property type="gene designation" value="hob1"/>
</dbReference>
<dbReference type="VEuPathDB" id="FungiDB:SPBC21D10.12"/>
<dbReference type="eggNOG" id="KOG3771">
    <property type="taxonomic scope" value="Eukaryota"/>
</dbReference>
<dbReference type="HOGENOM" id="CLU_025518_0_1_1"/>
<dbReference type="InParanoid" id="O74352"/>
<dbReference type="OMA" id="QEYDYYN"/>
<dbReference type="PhylomeDB" id="O74352"/>
<dbReference type="PRO" id="PR:O74352"/>
<dbReference type="Proteomes" id="UP000002485">
    <property type="component" value="Chromosome II"/>
</dbReference>
<dbReference type="GO" id="GO:0030479">
    <property type="term" value="C:actin cortical patch"/>
    <property type="evidence" value="ECO:0000314"/>
    <property type="project" value="PomBase"/>
</dbReference>
<dbReference type="GO" id="GO:0015629">
    <property type="term" value="C:actin cytoskeleton"/>
    <property type="evidence" value="ECO:0000318"/>
    <property type="project" value="GO_Central"/>
</dbReference>
<dbReference type="GO" id="GO:0043332">
    <property type="term" value="C:mating projection tip"/>
    <property type="evidence" value="ECO:0000318"/>
    <property type="project" value="GO_Central"/>
</dbReference>
<dbReference type="GO" id="GO:0031097">
    <property type="term" value="C:medial cortex"/>
    <property type="evidence" value="ECO:0000314"/>
    <property type="project" value="PomBase"/>
</dbReference>
<dbReference type="GO" id="GO:0110085">
    <property type="term" value="C:mitotic actomyosin contractile ring"/>
    <property type="evidence" value="ECO:0000314"/>
    <property type="project" value="PomBase"/>
</dbReference>
<dbReference type="GO" id="GO:1990528">
    <property type="term" value="C:Rvs161p-Rvs167p complex"/>
    <property type="evidence" value="ECO:0000318"/>
    <property type="project" value="GO_Central"/>
</dbReference>
<dbReference type="GO" id="GO:0043495">
    <property type="term" value="F:protein-membrane adaptor activity"/>
    <property type="evidence" value="ECO:0000255"/>
    <property type="project" value="PomBase"/>
</dbReference>
<dbReference type="GO" id="GO:0051666">
    <property type="term" value="P:actin cortical patch localization"/>
    <property type="evidence" value="ECO:0000318"/>
    <property type="project" value="GO_Central"/>
</dbReference>
<dbReference type="GO" id="GO:0006897">
    <property type="term" value="P:endocytosis"/>
    <property type="evidence" value="ECO:0000318"/>
    <property type="project" value="GO_Central"/>
</dbReference>
<dbReference type="GO" id="GO:0007163">
    <property type="term" value="P:establishment or maintenance of cell polarity"/>
    <property type="evidence" value="ECO:0000316"/>
    <property type="project" value="PomBase"/>
</dbReference>
<dbReference type="GO" id="GO:0097320">
    <property type="term" value="P:plasma membrane tubulation"/>
    <property type="evidence" value="ECO:0000318"/>
    <property type="project" value="GO_Central"/>
</dbReference>
<dbReference type="CDD" id="cd07599">
    <property type="entry name" value="BAR_Rvs167p"/>
    <property type="match status" value="1"/>
</dbReference>
<dbReference type="FunFam" id="1.20.1270.60:FF:000048">
    <property type="entry name" value="BAR adaptor protein RVS167"/>
    <property type="match status" value="1"/>
</dbReference>
<dbReference type="FunFam" id="2.30.30.40:FF:000189">
    <property type="entry name" value="BAR adaptor protein RVS167"/>
    <property type="match status" value="1"/>
</dbReference>
<dbReference type="Gene3D" id="1.20.1270.60">
    <property type="entry name" value="Arfaptin homology (AH) domain/BAR domain"/>
    <property type="match status" value="1"/>
</dbReference>
<dbReference type="Gene3D" id="2.30.30.40">
    <property type="entry name" value="SH3 Domains"/>
    <property type="match status" value="1"/>
</dbReference>
<dbReference type="InterPro" id="IPR027267">
    <property type="entry name" value="AH/BAR_dom_sf"/>
</dbReference>
<dbReference type="InterPro" id="IPR004148">
    <property type="entry name" value="BAR_dom"/>
</dbReference>
<dbReference type="InterPro" id="IPR046982">
    <property type="entry name" value="BIN3/RVS161-like"/>
</dbReference>
<dbReference type="InterPro" id="IPR036028">
    <property type="entry name" value="SH3-like_dom_sf"/>
</dbReference>
<dbReference type="InterPro" id="IPR001452">
    <property type="entry name" value="SH3_domain"/>
</dbReference>
<dbReference type="PANTHER" id="PTHR47174">
    <property type="entry name" value="BRIDGING INTEGRATOR 3"/>
    <property type="match status" value="1"/>
</dbReference>
<dbReference type="PANTHER" id="PTHR47174:SF1">
    <property type="entry name" value="REDUCED VIABILITY UPON STARVATION PROTEIN 167"/>
    <property type="match status" value="1"/>
</dbReference>
<dbReference type="Pfam" id="PF03114">
    <property type="entry name" value="BAR"/>
    <property type="match status" value="1"/>
</dbReference>
<dbReference type="Pfam" id="PF00018">
    <property type="entry name" value="SH3_1"/>
    <property type="match status" value="1"/>
</dbReference>
<dbReference type="PRINTS" id="PR00452">
    <property type="entry name" value="SH3DOMAIN"/>
</dbReference>
<dbReference type="SMART" id="SM00721">
    <property type="entry name" value="BAR"/>
    <property type="match status" value="1"/>
</dbReference>
<dbReference type="SMART" id="SM00326">
    <property type="entry name" value="SH3"/>
    <property type="match status" value="1"/>
</dbReference>
<dbReference type="SUPFAM" id="SSF103657">
    <property type="entry name" value="BAR/IMD domain-like"/>
    <property type="match status" value="1"/>
</dbReference>
<dbReference type="SUPFAM" id="SSF50044">
    <property type="entry name" value="SH3-domain"/>
    <property type="match status" value="1"/>
</dbReference>
<dbReference type="PROSITE" id="PS51021">
    <property type="entry name" value="BAR"/>
    <property type="match status" value="1"/>
</dbReference>
<dbReference type="PROSITE" id="PS50002">
    <property type="entry name" value="SH3"/>
    <property type="match status" value="1"/>
</dbReference>
<reference key="1">
    <citation type="journal article" date="2003" name="Oncogene">
        <title>hob1+, the fission yeast homolog of Bin1, is dispensable for endocytosis or actin organization, but required for the response to starvation or genotoxic stress.</title>
        <authorList>
            <person name="Routhier E.L."/>
            <person name="Donover P.S."/>
            <person name="Prendergast G.C."/>
        </authorList>
    </citation>
    <scope>NUCLEOTIDE SEQUENCE [MRNA]</scope>
    <scope>FUNCTION</scope>
</reference>
<reference key="2">
    <citation type="journal article" date="2002" name="Nature">
        <title>The genome sequence of Schizosaccharomyces pombe.</title>
        <authorList>
            <person name="Wood V."/>
            <person name="Gwilliam R."/>
            <person name="Rajandream M.A."/>
            <person name="Lyne M.H."/>
            <person name="Lyne R."/>
            <person name="Stewart A."/>
            <person name="Sgouros J.G."/>
            <person name="Peat N."/>
            <person name="Hayles J."/>
            <person name="Baker S.G."/>
            <person name="Basham D."/>
            <person name="Bowman S."/>
            <person name="Brooks K."/>
            <person name="Brown D."/>
            <person name="Brown S."/>
            <person name="Chillingworth T."/>
            <person name="Churcher C.M."/>
            <person name="Collins M."/>
            <person name="Connor R."/>
            <person name="Cronin A."/>
            <person name="Davis P."/>
            <person name="Feltwell T."/>
            <person name="Fraser A."/>
            <person name="Gentles S."/>
            <person name="Goble A."/>
            <person name="Hamlin N."/>
            <person name="Harris D.E."/>
            <person name="Hidalgo J."/>
            <person name="Hodgson G."/>
            <person name="Holroyd S."/>
            <person name="Hornsby T."/>
            <person name="Howarth S."/>
            <person name="Huckle E.J."/>
            <person name="Hunt S."/>
            <person name="Jagels K."/>
            <person name="James K.D."/>
            <person name="Jones L."/>
            <person name="Jones M."/>
            <person name="Leather S."/>
            <person name="McDonald S."/>
            <person name="McLean J."/>
            <person name="Mooney P."/>
            <person name="Moule S."/>
            <person name="Mungall K.L."/>
            <person name="Murphy L.D."/>
            <person name="Niblett D."/>
            <person name="Odell C."/>
            <person name="Oliver K."/>
            <person name="O'Neil S."/>
            <person name="Pearson D."/>
            <person name="Quail M.A."/>
            <person name="Rabbinowitsch E."/>
            <person name="Rutherford K.M."/>
            <person name="Rutter S."/>
            <person name="Saunders D."/>
            <person name="Seeger K."/>
            <person name="Sharp S."/>
            <person name="Skelton J."/>
            <person name="Simmonds M.N."/>
            <person name="Squares R."/>
            <person name="Squares S."/>
            <person name="Stevens K."/>
            <person name="Taylor K."/>
            <person name="Taylor R.G."/>
            <person name="Tivey A."/>
            <person name="Walsh S.V."/>
            <person name="Warren T."/>
            <person name="Whitehead S."/>
            <person name="Woodward J.R."/>
            <person name="Volckaert G."/>
            <person name="Aert R."/>
            <person name="Robben J."/>
            <person name="Grymonprez B."/>
            <person name="Weltjens I."/>
            <person name="Vanstreels E."/>
            <person name="Rieger M."/>
            <person name="Schaefer M."/>
            <person name="Mueller-Auer S."/>
            <person name="Gabel C."/>
            <person name="Fuchs M."/>
            <person name="Duesterhoeft A."/>
            <person name="Fritzc C."/>
            <person name="Holzer E."/>
            <person name="Moestl D."/>
            <person name="Hilbert H."/>
            <person name="Borzym K."/>
            <person name="Langer I."/>
            <person name="Beck A."/>
            <person name="Lehrach H."/>
            <person name="Reinhardt R."/>
            <person name="Pohl T.M."/>
            <person name="Eger P."/>
            <person name="Zimmermann W."/>
            <person name="Wedler H."/>
            <person name="Wambutt R."/>
            <person name="Purnelle B."/>
            <person name="Goffeau A."/>
            <person name="Cadieu E."/>
            <person name="Dreano S."/>
            <person name="Gloux S."/>
            <person name="Lelaure V."/>
            <person name="Mottier S."/>
            <person name="Galibert F."/>
            <person name="Aves S.J."/>
            <person name="Xiang Z."/>
            <person name="Hunt C."/>
            <person name="Moore K."/>
            <person name="Hurst S.M."/>
            <person name="Lucas M."/>
            <person name="Rochet M."/>
            <person name="Gaillardin C."/>
            <person name="Tallada V.A."/>
            <person name="Garzon A."/>
            <person name="Thode G."/>
            <person name="Daga R.R."/>
            <person name="Cruzado L."/>
            <person name="Jimenez J."/>
            <person name="Sanchez M."/>
            <person name="del Rey F."/>
            <person name="Benito J."/>
            <person name="Dominguez A."/>
            <person name="Revuelta J.L."/>
            <person name="Moreno S."/>
            <person name="Armstrong J."/>
            <person name="Forsburg S.L."/>
            <person name="Cerutti L."/>
            <person name="Lowe T."/>
            <person name="McCombie W.R."/>
            <person name="Paulsen I."/>
            <person name="Potashkin J."/>
            <person name="Shpakovski G.V."/>
            <person name="Ussery D."/>
            <person name="Barrell B.G."/>
            <person name="Nurse P."/>
        </authorList>
    </citation>
    <scope>NUCLEOTIDE SEQUENCE [LARGE SCALE GENOMIC DNA]</scope>
    <source>
        <strain>972 / ATCC 24843</strain>
    </source>
</reference>
<reference key="3">
    <citation type="journal article" date="2008" name="J. Proteome Res.">
        <title>Phosphoproteome analysis of fission yeast.</title>
        <authorList>
            <person name="Wilson-Grady J.T."/>
            <person name="Villen J."/>
            <person name="Gygi S.P."/>
        </authorList>
    </citation>
    <scope>PHOSPHORYLATION [LARGE SCALE ANALYSIS] AT SER-298; SER-299; SER-301 AND SER-303</scope>
    <scope>IDENTIFICATION BY MASS SPECTROMETRY</scope>
</reference>
<protein>
    <recommendedName>
        <fullName>Protein hob1</fullName>
    </recommendedName>
    <alternativeName>
        <fullName>Homolog of Bin1</fullName>
    </alternativeName>
</protein>
<comment type="function">
    <text evidence="5">Has a role in DNA damage signaling as a part of stress response processes.</text>
</comment>
<sequence length="466" mass="51392">MSWKGFTKALARTPQTLRSKFNVGEITKDPIYEDAGRRFKSLETEAKKLAEDAKKYTDAINGLLNHQIGFADACIEIYKPISGRASDPESYEQEGNAEGIEAAEAYKEIVYDLQKNLASEMDVINTRIVNPTGELLKIVKDVDKLLLKRDHKQLDYDRHRSSFKKLQEKKDKSLKDEKKLYEAETAFEQSSQEYEYYNEMLKEELPKLFALAQSFIAPLFQGFYYMQLNVYYVLYEKMSHCEIQYFDFNTDILESYERRRGDVKDRAEALTITKFKTAKPTYKRPGMGPGGKDATASSSSSFSSKREEAAAEPSSSTATDIPPPYSTPSVAGASDYSTPSAGYQTVQTTTTTTEAAAAQYPQAAFPPPPVMPQPAAAAVTTPVAAPVAAAAAAVPVPPPAPAPAAAPAAEHVVALYDYAAQAAGDLSFHAGDRIEVVSRTDNQNEWWIGRLNGAQGQFPGNYVQLE</sequence>
<feature type="chain" id="PRO_0000192954" description="Protein hob1">
    <location>
        <begin position="1"/>
        <end position="466"/>
    </location>
</feature>
<feature type="domain" description="BAR" evidence="3">
    <location>
        <begin position="17"/>
        <end position="269"/>
    </location>
</feature>
<feature type="domain" description="SH3" evidence="2">
    <location>
        <begin position="407"/>
        <end position="466"/>
    </location>
</feature>
<feature type="region of interest" description="Disordered" evidence="4">
    <location>
        <begin position="280"/>
        <end position="342"/>
    </location>
</feature>
<feature type="coiled-coil region" evidence="1">
    <location>
        <begin position="31"/>
        <end position="67"/>
    </location>
</feature>
<feature type="coiled-coil region" evidence="1">
    <location>
        <begin position="177"/>
        <end position="204"/>
    </location>
</feature>
<feature type="compositionally biased region" description="Low complexity" evidence="4">
    <location>
        <begin position="294"/>
        <end position="303"/>
    </location>
</feature>
<feature type="modified residue" description="Phosphoserine" evidence="6">
    <location>
        <position position="298"/>
    </location>
</feature>
<feature type="modified residue" description="Phosphoserine" evidence="6">
    <location>
        <position position="299"/>
    </location>
</feature>
<feature type="modified residue" description="Phosphoserine" evidence="6">
    <location>
        <position position="301"/>
    </location>
</feature>
<feature type="modified residue" description="Phosphoserine" evidence="6">
    <location>
        <position position="303"/>
    </location>
</feature>
<evidence type="ECO:0000255" key="1"/>
<evidence type="ECO:0000255" key="2">
    <source>
        <dbReference type="PROSITE-ProRule" id="PRU00192"/>
    </source>
</evidence>
<evidence type="ECO:0000255" key="3">
    <source>
        <dbReference type="PROSITE-ProRule" id="PRU00361"/>
    </source>
</evidence>
<evidence type="ECO:0000256" key="4">
    <source>
        <dbReference type="SAM" id="MobiDB-lite"/>
    </source>
</evidence>
<evidence type="ECO:0000269" key="5">
    <source>
    </source>
</evidence>
<evidence type="ECO:0000269" key="6">
    <source>
    </source>
</evidence>
<gene>
    <name type="primary">hob1</name>
    <name type="ORF">SPBC21D10.12</name>
</gene>
<accession>O74352</accession>
<proteinExistence type="evidence at protein level"/>